<feature type="chain" id="PRO_0000199618" description="Profilin-5">
    <location>
        <begin position="1"/>
        <end position="134"/>
    </location>
</feature>
<name>PRF5_ARATH</name>
<protein>
    <recommendedName>
        <fullName evidence="7">Profilin-5</fullName>
    </recommendedName>
    <alternativeName>
        <fullName evidence="10">AtPROF4</fullName>
    </alternativeName>
    <alternativeName>
        <fullName evidence="8">AthPRF4</fullName>
    </alternativeName>
</protein>
<gene>
    <name evidence="7" type="primary">PRF5</name>
    <name evidence="9" type="synonym">PFN4</name>
    <name evidence="8" type="synonym">PRF4</name>
    <name evidence="10" type="synonym">PRO4</name>
    <name evidence="11" type="ordered locus">At2g19770</name>
    <name evidence="12" type="ORF">F6F22.20</name>
</gene>
<sequence length="134" mass="14550">MSWQAYVDEHLMCDVGDGQGHHLTAAAIIGHDGSVWAQSANFPQFKPQEITDIMKDFDEPGHLAPTGMFLAGLKYMVIQGEPNAVIRGKKGAGGITIKKTGQSMVFGLYEEPVTPGQCNMVVERLGDYLIEQGL</sequence>
<comment type="function">
    <text evidence="3 4">Binds to actin monomers and regulates the organization of the actin cytoskeleton (PubMed:29861135). At high concentrations, profilin prevents the polymerization of actin, whereas it enhances it at low concentrations (PubMed:29861135). At low concentrations, associates with the poly-proline motif of formins to enhance actin filament elongation rate (PubMed:29861135). Acts redundantly with PRF4 to regulate apical actin polymerization at the tip of pollen tube and control polarized pollen tube growth (PubMed:26433093). Functions probably by favoring formin-mediated actin polymerization at pollen tube tips (PubMed:26433093).</text>
</comment>
<comment type="subunit">
    <text evidence="10">Occurs in many kinds of cells as a complex with monomeric actin in a 1:1 ratio.</text>
</comment>
<comment type="subcellular location">
    <subcellularLocation>
        <location evidence="10">Cytoplasm</location>
        <location evidence="10">Cytoskeleton</location>
    </subcellularLocation>
</comment>
<comment type="tissue specificity">
    <text evidence="1 2 5 6">Specifically expressed in mature pollen grains (PubMed:11977080, PubMed:16361517, PubMed:8685262, PubMed:8771785). Expressed in germinating pollen grains (PubMed:11977080, PubMed:8771785). Expressed in growing pollen tubes (at protein level) (PubMed:11977080).</text>
</comment>
<comment type="disruption phenotype">
    <text evidence="3">In germinating pollen grain, the double mutant prf4 and prf5 reduces the amount of F-actin and induces disorganization of actin filaments within the apical and subapical regions of the pollen tube.</text>
</comment>
<comment type="similarity">
    <text evidence="10">Belongs to the profilin family.</text>
</comment>
<comment type="sequence caution" evidence="10">
    <conflict type="erroneous termination">
        <sequence resource="EMBL-CDS" id="ABK28500"/>
    </conflict>
    <text>Extended C-terminus.</text>
</comment>
<accession>Q38905</accession>
<accession>A0MEN1</accession>
<accession>Q1PF40</accession>
<proteinExistence type="evidence at protein level"/>
<organism>
    <name type="scientific">Arabidopsis thaliana</name>
    <name type="common">Mouse-ear cress</name>
    <dbReference type="NCBI Taxonomy" id="3702"/>
    <lineage>
        <taxon>Eukaryota</taxon>
        <taxon>Viridiplantae</taxon>
        <taxon>Streptophyta</taxon>
        <taxon>Embryophyta</taxon>
        <taxon>Tracheophyta</taxon>
        <taxon>Spermatophyta</taxon>
        <taxon>Magnoliopsida</taxon>
        <taxon>eudicotyledons</taxon>
        <taxon>Gunneridae</taxon>
        <taxon>Pentapetalae</taxon>
        <taxon>rosids</taxon>
        <taxon>malvids</taxon>
        <taxon>Brassicales</taxon>
        <taxon>Brassicaceae</taxon>
        <taxon>Camelineae</taxon>
        <taxon>Arabidopsis</taxon>
    </lineage>
</organism>
<evidence type="ECO:0000269" key="1">
    <source>
    </source>
</evidence>
<evidence type="ECO:0000269" key="2">
    <source>
    </source>
</evidence>
<evidence type="ECO:0000269" key="3">
    <source>
    </source>
</evidence>
<evidence type="ECO:0000269" key="4">
    <source>
    </source>
</evidence>
<evidence type="ECO:0000269" key="5">
    <source>
    </source>
</evidence>
<evidence type="ECO:0000269" key="6">
    <source>
    </source>
</evidence>
<evidence type="ECO:0000303" key="7">
    <source>
    </source>
</evidence>
<evidence type="ECO:0000303" key="8">
    <source>
    </source>
</evidence>
<evidence type="ECO:0000303" key="9">
    <source>
    </source>
</evidence>
<evidence type="ECO:0000305" key="10"/>
<evidence type="ECO:0000312" key="11">
    <source>
        <dbReference type="Araport" id="AT2G19770"/>
    </source>
</evidence>
<evidence type="ECO:0000312" key="12">
    <source>
        <dbReference type="EMBL" id="AAC62139.1"/>
    </source>
</evidence>
<dbReference type="EMBL" id="U43324">
    <property type="protein sequence ID" value="AAB39479.1"/>
    <property type="molecule type" value="Genomic_DNA"/>
</dbReference>
<dbReference type="EMBL" id="AC005169">
    <property type="protein sequence ID" value="AAC62139.1"/>
    <property type="molecule type" value="Genomic_DNA"/>
</dbReference>
<dbReference type="EMBL" id="CP002685">
    <property type="protein sequence ID" value="AEC06924.1"/>
    <property type="molecule type" value="Genomic_DNA"/>
</dbReference>
<dbReference type="EMBL" id="DQ446526">
    <property type="protein sequence ID" value="ABE65830.1"/>
    <property type="molecule type" value="mRNA"/>
</dbReference>
<dbReference type="EMBL" id="DQ653003">
    <property type="protein sequence ID" value="ABK28500.1"/>
    <property type="status" value="ALT_SEQ"/>
    <property type="molecule type" value="mRNA"/>
</dbReference>
<dbReference type="EMBL" id="AY085645">
    <property type="protein sequence ID" value="AAM62866.1"/>
    <property type="molecule type" value="mRNA"/>
</dbReference>
<dbReference type="PIR" id="H84580">
    <property type="entry name" value="H84580"/>
</dbReference>
<dbReference type="RefSeq" id="NP_179567.1">
    <property type="nucleotide sequence ID" value="NM_127535.3"/>
</dbReference>
<dbReference type="SMR" id="Q38905"/>
<dbReference type="FunCoup" id="Q38905">
    <property type="interactions" value="618"/>
</dbReference>
<dbReference type="STRING" id="3702.Q38905"/>
<dbReference type="PaxDb" id="3702-AT2G19770.1"/>
<dbReference type="ProteomicsDB" id="226372"/>
<dbReference type="EnsemblPlants" id="AT2G19770.1">
    <property type="protein sequence ID" value="AT2G19770.1"/>
    <property type="gene ID" value="AT2G19770"/>
</dbReference>
<dbReference type="GeneID" id="816496"/>
<dbReference type="Gramene" id="AT2G19770.1">
    <property type="protein sequence ID" value="AT2G19770.1"/>
    <property type="gene ID" value="AT2G19770"/>
</dbReference>
<dbReference type="KEGG" id="ath:AT2G19770"/>
<dbReference type="Araport" id="AT2G19770"/>
<dbReference type="TAIR" id="AT2G19770">
    <property type="gene designation" value="PRF5"/>
</dbReference>
<dbReference type="eggNOG" id="KOG1755">
    <property type="taxonomic scope" value="Eukaryota"/>
</dbReference>
<dbReference type="HOGENOM" id="CLU_120772_0_1_1"/>
<dbReference type="InParanoid" id="Q38905"/>
<dbReference type="OMA" id="GLQPEMC"/>
<dbReference type="OrthoDB" id="1051857at2759"/>
<dbReference type="PhylomeDB" id="Q38905"/>
<dbReference type="PRO" id="PR:Q38905"/>
<dbReference type="Proteomes" id="UP000006548">
    <property type="component" value="Chromosome 2"/>
</dbReference>
<dbReference type="ExpressionAtlas" id="Q38905">
    <property type="expression patterns" value="baseline and differential"/>
</dbReference>
<dbReference type="GO" id="GO:0005737">
    <property type="term" value="C:cytoplasm"/>
    <property type="evidence" value="ECO:0000314"/>
    <property type="project" value="TAIR"/>
</dbReference>
<dbReference type="GO" id="GO:0005856">
    <property type="term" value="C:cytoskeleton"/>
    <property type="evidence" value="ECO:0007669"/>
    <property type="project" value="UniProtKB-SubCell"/>
</dbReference>
<dbReference type="GO" id="GO:0005739">
    <property type="term" value="C:mitochondrion"/>
    <property type="evidence" value="ECO:0007005"/>
    <property type="project" value="TAIR"/>
</dbReference>
<dbReference type="GO" id="GO:0005634">
    <property type="term" value="C:nucleus"/>
    <property type="evidence" value="ECO:0007005"/>
    <property type="project" value="TAIR"/>
</dbReference>
<dbReference type="GO" id="GO:0009524">
    <property type="term" value="C:phragmoplast"/>
    <property type="evidence" value="ECO:0007005"/>
    <property type="project" value="TAIR"/>
</dbReference>
<dbReference type="GO" id="GO:0003785">
    <property type="term" value="F:actin monomer binding"/>
    <property type="evidence" value="ECO:0000304"/>
    <property type="project" value="TAIR"/>
</dbReference>
<dbReference type="GO" id="GO:0030036">
    <property type="term" value="P:actin cytoskeleton organization"/>
    <property type="evidence" value="ECO:0000304"/>
    <property type="project" value="TAIR"/>
</dbReference>
<dbReference type="CDD" id="cd00148">
    <property type="entry name" value="PROF"/>
    <property type="match status" value="1"/>
</dbReference>
<dbReference type="FunFam" id="3.30.450.30:FF:000001">
    <property type="entry name" value="Profilin"/>
    <property type="match status" value="1"/>
</dbReference>
<dbReference type="Gene3D" id="3.30.450.30">
    <property type="entry name" value="Dynein light chain 2a, cytoplasmic"/>
    <property type="match status" value="1"/>
</dbReference>
<dbReference type="InterPro" id="IPR048278">
    <property type="entry name" value="PFN"/>
</dbReference>
<dbReference type="InterPro" id="IPR005455">
    <property type="entry name" value="PFN_euk"/>
</dbReference>
<dbReference type="InterPro" id="IPR036140">
    <property type="entry name" value="PFN_sf"/>
</dbReference>
<dbReference type="InterPro" id="IPR027310">
    <property type="entry name" value="Profilin_CS"/>
</dbReference>
<dbReference type="PANTHER" id="PTHR11604">
    <property type="entry name" value="PROFILIN"/>
    <property type="match status" value="1"/>
</dbReference>
<dbReference type="PANTHER" id="PTHR11604:SF25">
    <property type="entry name" value="PROFILIN-5"/>
    <property type="match status" value="1"/>
</dbReference>
<dbReference type="Pfam" id="PF00235">
    <property type="entry name" value="Profilin"/>
    <property type="match status" value="1"/>
</dbReference>
<dbReference type="PRINTS" id="PR00392">
    <property type="entry name" value="PROFILIN"/>
</dbReference>
<dbReference type="PRINTS" id="PR01640">
    <property type="entry name" value="PROFILINPLNT"/>
</dbReference>
<dbReference type="SMART" id="SM00392">
    <property type="entry name" value="PROF"/>
    <property type="match status" value="1"/>
</dbReference>
<dbReference type="SUPFAM" id="SSF55770">
    <property type="entry name" value="Profilin (actin-binding protein)"/>
    <property type="match status" value="1"/>
</dbReference>
<dbReference type="PROSITE" id="PS00414">
    <property type="entry name" value="PROFILIN"/>
    <property type="match status" value="1"/>
</dbReference>
<reference key="1">
    <citation type="journal article" date="1996" name="Plant J.">
        <title>Arabidopsis profilins are functionally similar to yeast profilins: identification of a vascular bundle-specific profilin and a pollen-specific profilin.</title>
        <authorList>
            <person name="Christensen H.E.M."/>
            <person name="Ramachandran S."/>
            <person name="Tan C.T."/>
            <person name="Surana U."/>
            <person name="Dong C.H."/>
            <person name="Chua N.-H."/>
        </authorList>
    </citation>
    <scope>NUCLEOTIDE SEQUENCE [GENOMIC DNA]</scope>
    <scope>TISSUE SPECIFICITY</scope>
    <source>
        <strain>cv. Columbia</strain>
    </source>
</reference>
<reference key="2">
    <citation type="journal article" date="1999" name="Nature">
        <title>Sequence and analysis of chromosome 2 of the plant Arabidopsis thaliana.</title>
        <authorList>
            <person name="Lin X."/>
            <person name="Kaul S."/>
            <person name="Rounsley S.D."/>
            <person name="Shea T.P."/>
            <person name="Benito M.-I."/>
            <person name="Town C.D."/>
            <person name="Fujii C.Y."/>
            <person name="Mason T.M."/>
            <person name="Bowman C.L."/>
            <person name="Barnstead M.E."/>
            <person name="Feldblyum T.V."/>
            <person name="Buell C.R."/>
            <person name="Ketchum K.A."/>
            <person name="Lee J.J."/>
            <person name="Ronning C.M."/>
            <person name="Koo H.L."/>
            <person name="Moffat K.S."/>
            <person name="Cronin L.A."/>
            <person name="Shen M."/>
            <person name="Pai G."/>
            <person name="Van Aken S."/>
            <person name="Umayam L."/>
            <person name="Tallon L.J."/>
            <person name="Gill J.E."/>
            <person name="Adams M.D."/>
            <person name="Carrera A.J."/>
            <person name="Creasy T.H."/>
            <person name="Goodman H.M."/>
            <person name="Somerville C.R."/>
            <person name="Copenhaver G.P."/>
            <person name="Preuss D."/>
            <person name="Nierman W.C."/>
            <person name="White O."/>
            <person name="Eisen J.A."/>
            <person name="Salzberg S.L."/>
            <person name="Fraser C.M."/>
            <person name="Venter J.C."/>
        </authorList>
    </citation>
    <scope>NUCLEOTIDE SEQUENCE [LARGE SCALE GENOMIC DNA]</scope>
    <source>
        <strain>cv. Columbia</strain>
    </source>
</reference>
<reference key="3">
    <citation type="journal article" date="2017" name="Plant J.">
        <title>Araport11: a complete reannotation of the Arabidopsis thaliana reference genome.</title>
        <authorList>
            <person name="Cheng C.Y."/>
            <person name="Krishnakumar V."/>
            <person name="Chan A.P."/>
            <person name="Thibaud-Nissen F."/>
            <person name="Schobel S."/>
            <person name="Town C.D."/>
        </authorList>
    </citation>
    <scope>GENOME REANNOTATION</scope>
    <source>
        <strain>cv. Columbia</strain>
    </source>
</reference>
<reference key="4">
    <citation type="journal article" date="2006" name="Plant Biotechnol. J.">
        <title>Simultaneous high-throughput recombinational cloning of open reading frames in closed and open configurations.</title>
        <authorList>
            <person name="Underwood B.A."/>
            <person name="Vanderhaeghen R."/>
            <person name="Whitford R."/>
            <person name="Town C.D."/>
            <person name="Hilson P."/>
        </authorList>
    </citation>
    <scope>NUCLEOTIDE SEQUENCE [LARGE SCALE MRNA]</scope>
    <source>
        <strain>cv. Columbia</strain>
    </source>
</reference>
<reference key="5">
    <citation type="submission" date="2002-03" db="EMBL/GenBank/DDBJ databases">
        <title>Full-length cDNA from Arabidopsis thaliana.</title>
        <authorList>
            <person name="Brover V.V."/>
            <person name="Troukhan M.E."/>
            <person name="Alexandrov N.A."/>
            <person name="Lu Y.-P."/>
            <person name="Flavell R.B."/>
            <person name="Feldmann K.A."/>
        </authorList>
    </citation>
    <scope>NUCLEOTIDE SEQUENCE [LARGE SCALE MRNA]</scope>
</reference>
<reference key="6">
    <citation type="journal article" date="1996" name="Plant Physiol.">
        <title>The Arabidopsis profilin gene family. Evidence for an ancient split between constitutive and pollen-specific profilin genes.</title>
        <authorList>
            <person name="Huang S."/>
            <person name="McDowell J.M."/>
            <person name="Weise M.J."/>
            <person name="Meagher R.B."/>
        </authorList>
    </citation>
    <scope>TISSUE SPECIFICITY</scope>
</reference>
<reference key="7">
    <citation type="journal article" date="2002" name="Cell Motil. Cytoskeleton">
        <title>Plant profilin isovariants are distinctly regulated in vegetative and reproductive tissues.</title>
        <authorList>
            <person name="Kandasamy M.K."/>
            <person name="McKinney E.C."/>
            <person name="Meagher R.B."/>
        </authorList>
    </citation>
    <scope>TISSUE SPECIFICITY</scope>
</reference>
<reference key="8">
    <citation type="journal article" date="2006" name="Plant Physiol.">
        <title>Distinct roles of the first introns on the expression of Arabidopsis profilin gene family members.</title>
        <authorList>
            <person name="Jeong Y.M."/>
            <person name="Mun J.H."/>
            <person name="Lee I."/>
            <person name="Woo J.C."/>
            <person name="Hong C.B."/>
            <person name="Kim S.G."/>
        </authorList>
    </citation>
    <scope>TISSUE SPECIFICITY</scope>
</reference>
<reference key="9">
    <citation type="journal article" date="2015" name="Mol. Plant">
        <title>Profilin regulates apical actin polymerization to control polarized pollen tube growth.</title>
        <authorList>
            <person name="Liu X."/>
            <person name="Qu X."/>
            <person name="Jiang Y."/>
            <person name="Chang M."/>
            <person name="Zhang R."/>
            <person name="Wu Y."/>
            <person name="Fu Y."/>
            <person name="Huang S."/>
        </authorList>
    </citation>
    <scope>FUNCTION</scope>
    <scope>DISRUPTION PHENOTYPE</scope>
</reference>
<reference key="10">
    <citation type="journal article" date="2018" name="Curr. Biol.">
        <title>Profilin negatively regulates formin-mediated actin assembly to modulate PAMP-triggered plant immunity.</title>
        <authorList>
            <person name="Sun H."/>
            <person name="Qiao Z."/>
            <person name="Chua K.P."/>
            <person name="Tursic A."/>
            <person name="Liu X."/>
            <person name="Gao Y.G."/>
            <person name="Mu Y."/>
            <person name="Hou X."/>
            <person name="Miao Y."/>
        </authorList>
    </citation>
    <scope>FUNCTION</scope>
</reference>
<keyword id="KW-0009">Actin-binding</keyword>
<keyword id="KW-0963">Cytoplasm</keyword>
<keyword id="KW-0206">Cytoskeleton</keyword>
<keyword id="KW-1185">Reference proteome</keyword>